<feature type="initiator methionine" description="Removed" evidence="1">
    <location>
        <position position="1"/>
    </location>
</feature>
<feature type="chain" id="PRO_0000389304" description="Small ribosomal subunit protein eS1">
    <location>
        <begin position="2"/>
        <end position="263"/>
    </location>
</feature>
<feature type="region of interest" description="Disordered" evidence="2">
    <location>
        <begin position="235"/>
        <end position="263"/>
    </location>
</feature>
<feature type="compositionally biased region" description="Basic and acidic residues" evidence="2">
    <location>
        <begin position="244"/>
        <end position="254"/>
    </location>
</feature>
<sequence length="263" mass="29754">MAVGKNKGLSKGGKKGVKKKIVDPFTRKDWYDVKAPSMFSKRQVGTTLVNRTQGTKIASEGLKGRVFEVSLADLQADTDAERSFRKFRLIAEYVQGRNVLCNFHGMDLTTDKLRWMVKKWQTLIEANIDVKTTDGYVLRVFCIGFTNKDSLSQRKTCYAQHTQVRAIRKKMCEIITRDVTNSELREVVNKLIPDSIAKDIEKACHGIYPLRDVCIRKVKVLKRPRFEISKLMELHGEGGGGKGEAGDKSERPEGYEPPVQESV</sequence>
<evidence type="ECO:0000255" key="1">
    <source>
        <dbReference type="HAMAP-Rule" id="MF_03122"/>
    </source>
</evidence>
<evidence type="ECO:0000256" key="2">
    <source>
        <dbReference type="SAM" id="MobiDB-lite"/>
    </source>
</evidence>
<evidence type="ECO:0000305" key="3"/>
<proteinExistence type="evidence at transcript level"/>
<reference key="1">
    <citation type="submission" date="2004-08" db="EMBL/GenBank/DDBJ databases">
        <title>Cloning of Bombyx mori ribosomal protein S3A gene.</title>
        <authorList>
            <person name="Chen K.P."/>
            <person name="Xu J.P."/>
            <person name="Yao Q."/>
        </authorList>
    </citation>
    <scope>NUCLEOTIDE SEQUENCE [MRNA]</scope>
</reference>
<reference key="2">
    <citation type="submission" date="2004-09" db="EMBL/GenBank/DDBJ databases">
        <title>Ribosomal proteins of Bombyx mori.</title>
        <authorList>
            <person name="Heckel D.G."/>
            <person name="Morgan M."/>
            <person name="Shimada T."/>
            <person name="Mita K."/>
        </authorList>
    </citation>
    <scope>NUCLEOTIDE SEQUENCE [MRNA]</scope>
    <source>
        <strain>C108</strain>
    </source>
</reference>
<name>RS3A_BOMMO</name>
<accession>Q64FN2</accession>
<protein>
    <recommendedName>
        <fullName evidence="1">Small ribosomal subunit protein eS1</fullName>
    </recommendedName>
    <alternativeName>
        <fullName evidence="3">40S ribosomal protein S3a</fullName>
    </alternativeName>
</protein>
<comment type="subunit">
    <text evidence="1">Component of the small ribosomal subunit. Mature ribosomes consist of a small (40S) and a large (60S) subunit. The 40S subunit contains about 33 different proteins and 1 molecule of RNA (18S). The 60S subunit contains about 49 different proteins and 3 molecules of RNA (28S, 5.8S and 5S).</text>
</comment>
<comment type="subcellular location">
    <subcellularLocation>
        <location evidence="1">Cytoplasm</location>
    </subcellularLocation>
</comment>
<comment type="similarity">
    <text evidence="1">Belongs to the eukaryotic ribosomal protein eS1 family.</text>
</comment>
<keyword id="KW-0963">Cytoplasm</keyword>
<keyword id="KW-1185">Reference proteome</keyword>
<keyword id="KW-0687">Ribonucleoprotein</keyword>
<keyword id="KW-0689">Ribosomal protein</keyword>
<organism>
    <name type="scientific">Bombyx mori</name>
    <name type="common">Silk moth</name>
    <dbReference type="NCBI Taxonomy" id="7091"/>
    <lineage>
        <taxon>Eukaryota</taxon>
        <taxon>Metazoa</taxon>
        <taxon>Ecdysozoa</taxon>
        <taxon>Arthropoda</taxon>
        <taxon>Hexapoda</taxon>
        <taxon>Insecta</taxon>
        <taxon>Pterygota</taxon>
        <taxon>Neoptera</taxon>
        <taxon>Endopterygota</taxon>
        <taxon>Lepidoptera</taxon>
        <taxon>Glossata</taxon>
        <taxon>Ditrysia</taxon>
        <taxon>Bombycoidea</taxon>
        <taxon>Bombycidae</taxon>
        <taxon>Bombycinae</taxon>
        <taxon>Bombyx</taxon>
    </lineage>
</organism>
<dbReference type="EMBL" id="AY705974">
    <property type="protein sequence ID" value="AAU26070.1"/>
    <property type="molecule type" value="mRNA"/>
</dbReference>
<dbReference type="EMBL" id="AY769317">
    <property type="protein sequence ID" value="AAV34859.1"/>
    <property type="molecule type" value="mRNA"/>
</dbReference>
<dbReference type="RefSeq" id="NP_001037255.1">
    <property type="nucleotide sequence ID" value="NM_001043790.1"/>
</dbReference>
<dbReference type="RefSeq" id="XP_062531107.1">
    <property type="nucleotide sequence ID" value="XM_062675123.1"/>
</dbReference>
<dbReference type="SMR" id="Q64FN2"/>
<dbReference type="FunCoup" id="Q64FN2">
    <property type="interactions" value="786"/>
</dbReference>
<dbReference type="STRING" id="7091.Q64FN2"/>
<dbReference type="PaxDb" id="7091-BGIBMGA011416-TA"/>
<dbReference type="EnsemblMetazoa" id="NM_001043790.1">
    <property type="protein sequence ID" value="NP_001037255.1"/>
    <property type="gene ID" value="GeneID_692713"/>
</dbReference>
<dbReference type="GeneID" id="692713"/>
<dbReference type="KEGG" id="bmor:692713"/>
<dbReference type="CTD" id="6189"/>
<dbReference type="eggNOG" id="KOG1628">
    <property type="taxonomic scope" value="Eukaryota"/>
</dbReference>
<dbReference type="HOGENOM" id="CLU_062507_0_1_1"/>
<dbReference type="InParanoid" id="Q64FN2"/>
<dbReference type="OMA" id="MCEIITR"/>
<dbReference type="OrthoDB" id="356150at7088"/>
<dbReference type="Proteomes" id="UP000005204">
    <property type="component" value="Unassembled WGS sequence"/>
</dbReference>
<dbReference type="GO" id="GO:0022627">
    <property type="term" value="C:cytosolic small ribosomal subunit"/>
    <property type="evidence" value="ECO:0007669"/>
    <property type="project" value="UniProtKB-UniRule"/>
</dbReference>
<dbReference type="GO" id="GO:0003735">
    <property type="term" value="F:structural constituent of ribosome"/>
    <property type="evidence" value="ECO:0007669"/>
    <property type="project" value="UniProtKB-UniRule"/>
</dbReference>
<dbReference type="GO" id="GO:0006412">
    <property type="term" value="P:translation"/>
    <property type="evidence" value="ECO:0007669"/>
    <property type="project" value="UniProtKB-UniRule"/>
</dbReference>
<dbReference type="HAMAP" id="MF_03122">
    <property type="entry name" value="Ribosomal_eS1_euk"/>
    <property type="match status" value="1"/>
</dbReference>
<dbReference type="InterPro" id="IPR001593">
    <property type="entry name" value="Ribosomal_eS1"/>
</dbReference>
<dbReference type="InterPro" id="IPR018281">
    <property type="entry name" value="Ribosomal_eS1_CS"/>
</dbReference>
<dbReference type="InterPro" id="IPR027500">
    <property type="entry name" value="Ribosomal_eS1_euk"/>
</dbReference>
<dbReference type="PANTHER" id="PTHR11830">
    <property type="entry name" value="40S RIBOSOMAL PROTEIN S3A"/>
    <property type="match status" value="1"/>
</dbReference>
<dbReference type="Pfam" id="PF01015">
    <property type="entry name" value="Ribosomal_S3Ae"/>
    <property type="match status" value="1"/>
</dbReference>
<dbReference type="SMART" id="SM01397">
    <property type="entry name" value="Ribosomal_S3Ae"/>
    <property type="match status" value="1"/>
</dbReference>
<dbReference type="PROSITE" id="PS01191">
    <property type="entry name" value="RIBOSOMAL_S3AE"/>
    <property type="match status" value="1"/>
</dbReference>